<gene>
    <name evidence="6" type="primary">aknOx</name>
</gene>
<keyword id="KW-0002">3D-structure</keyword>
<keyword id="KW-0045">Antibiotic biosynthesis</keyword>
<keyword id="KW-0903">Direct protein sequencing</keyword>
<keyword id="KW-0274">FAD</keyword>
<keyword id="KW-0285">Flavoprotein</keyword>
<keyword id="KW-0547">Nucleotide-binding</keyword>
<keyword id="KW-0560">Oxidoreductase</keyword>
<keyword id="KW-0732">Signal</keyword>
<reference key="1">
    <citation type="journal article" date="2002" name="Gene">
        <title>Cloning and characterization of Streptomyces galilaeus aclacinomycins polyketide synthase (PKS) cluster.</title>
        <authorList>
            <person name="Raty K."/>
            <person name="Kantola J."/>
            <person name="Hautala A."/>
            <person name="Hakala J."/>
            <person name="Ylihonko K."/>
            <person name="Mantsala P."/>
        </authorList>
    </citation>
    <scope>NUCLEOTIDE SEQUENCE [GENOMIC DNA]</scope>
    <scope>FUNCTION</scope>
    <source>
        <strain>ATCC31615</strain>
    </source>
</reference>
<reference key="2">
    <citation type="submission" date="2006-08" db="EMBL/GenBank/DDBJ databases">
        <authorList>
            <person name="Niemi J."/>
        </authorList>
    </citation>
    <scope>NUCLEOTIDE SEQUENCE [GENOMIC DNA]</scope>
    <source>
        <strain>ATCC31615</strain>
    </source>
</reference>
<reference key="3">
    <citation type="journal article" date="1979" name="J. Antibiot.">
        <title>Enzymatic conversion of aclacinomycin A to Y by a specific oxidoreductase in Streptomyces.</title>
        <authorList>
            <person name="Yoshimoto A."/>
            <person name="Ogasawara T."/>
            <person name="Kitamura I."/>
            <person name="Oki T."/>
            <person name="Inui T."/>
            <person name="Takeuchi T."/>
            <person name="Umezawa H."/>
        </authorList>
    </citation>
    <scope>FUNCTION</scope>
    <scope>DISRUPTION PHENOTYPE</scope>
    <scope>BIOPHYSICOCHEMICAL PROPERTIES</scope>
    <scope>SUBSTRATE SPECIFICITY</scope>
    <scope>COFACTOR</scope>
    <scope>ACTIVITY REGULATION</scope>
    <source>
        <strain>ATCC31133</strain>
    </source>
</reference>
<reference evidence="8" key="4">
    <citation type="journal article" date="2007" name="Proc. Natl. Acad. Sci. U.S.A.">
        <title>Aclacinomycin oxidoreductase (AknOx) from the biosynthetic pathway of the antibiotic aclacinomycin is an unusual flavoenzyme with a dual active site.</title>
        <authorList>
            <person name="Alexeev I."/>
            <person name="Sultana A."/>
            <person name="Maentsaelae P."/>
            <person name="Niemi J."/>
            <person name="Schneider G."/>
        </authorList>
    </citation>
    <scope>X-RAY CRYSTALLOGRAPHY (1.65 ANGSTROMS) OF 44-545 IN COMPLEX WITH FAD AND ACLACINOMYCIN Y</scope>
    <scope>PROTEIN SEQUENCE OF 44-68</scope>
    <scope>FUNCTION</scope>
    <scope>CATALYTIC ACTIVITY</scope>
    <scope>MUTAGENESIS OF TYR-187; HIS-314; GLU-417; SER-419; TYR-421 AND TYR-493</scope>
    <scope>BIOPHYSICOCHEMICAL PROPERTIES</scope>
    <scope>ACTIVE SITE</scope>
    <scope>COFACTOR</scope>
    <scope>SUBUNIT</scope>
    <scope>REACTION MECHANISM</scope>
    <source>
        <strain>ATCC31615</strain>
    </source>
</reference>
<proteinExistence type="evidence at protein level"/>
<evidence type="ECO:0000255" key="1">
    <source>
        <dbReference type="PROSITE-ProRule" id="PRU00648"/>
    </source>
</evidence>
<evidence type="ECO:0000255" key="2">
    <source>
        <dbReference type="PROSITE-ProRule" id="PRU00718"/>
    </source>
</evidence>
<evidence type="ECO:0000269" key="3">
    <source>
    </source>
</evidence>
<evidence type="ECO:0000269" key="4">
    <source>
    </source>
</evidence>
<evidence type="ECO:0000269" key="5">
    <source>
    </source>
</evidence>
<evidence type="ECO:0000303" key="6">
    <source>
    </source>
</evidence>
<evidence type="ECO:0000305" key="7"/>
<evidence type="ECO:0007744" key="8">
    <source>
        <dbReference type="PDB" id="2IPI"/>
    </source>
</evidence>
<evidence type="ECO:0007829" key="9">
    <source>
        <dbReference type="PDB" id="2IPI"/>
    </source>
</evidence>
<name>AKNOX_STRGJ</name>
<sequence>MFVLNEFTRRGFLGTAAAVGGTTVVTTALGGAPAAQAAVPEAADGGACGARTALVKVDRVDRRYQDLVTRGFNGRFRGRPDVVYVVHTADQVVDAVNQAMAAGQRIAVRSGGHCFEGFVDDPAVRAVIDMSQMRQVFYDSGKRAFAVEPGATLGETYRALYLDWGVTIPAGVCPQVGVGGHVLGGGYGPLSRRDGVVADHLYAVEVVVVDASGRARKVVATSAADDPNRELWWAHTGGGGGNFGIVTRYWFRTPGATGTDPSQLLPKAPTSTLRHIVTWDWSALTEEAFTRIIDNHGAWHQSNSAAGTPYASMHSVFYLNSRAAGQILLDIQIDGGLDGAEALLNDFVAAVNEGTGVEPAVQRSTEPWLRATLANKFDTGGFDRTKSKGAYLRKPWTAAQAATLYRHLSADSQVWGEVSLYSYGGKVNSVPETATATAQRDSIIKVWMSATWMDPAHDDANLAWIREIYREIFATTGGVPVPDDRTEGTFINYPDVDLVDERWNTSGVPWYTLYYKGNYPRLQKVKARWDPRDVFRHALSVRPPG</sequence>
<organism>
    <name type="scientific">Streptomyces galilaeus</name>
    <dbReference type="NCBI Taxonomy" id="33899"/>
    <lineage>
        <taxon>Bacteria</taxon>
        <taxon>Bacillati</taxon>
        <taxon>Actinomycetota</taxon>
        <taxon>Actinomycetes</taxon>
        <taxon>Kitasatosporales</taxon>
        <taxon>Streptomycetaceae</taxon>
        <taxon>Streptomyces</taxon>
    </lineage>
</organism>
<accession>Q0PCD7</accession>
<comment type="function">
    <text evidence="3 4 5">Involved in the modification of the terminal sugar residues in the last two steps in the biosynthesis of polyketide antibiotics of the aclacinomycin group. In the first reaction, it catalyzes the oxidation of the hydroxyl group at carbon C4 of the L-rhodinose terminal sugar moiety of aclacinomycin N (AclN) to a keto group, modifying the sugar to cinerulose A and generating aclacinomycin A (AclA). In the second reaction, it catalyzes the elimination of two hydrogen atoms from cinerulose A, leading to a double bond between carbon atoms C2 and C3 and the generation of the L-aculose terminal sugar moiety of aclacinomycin Y (AclY). It can also use aclacinomycin analogs, epsilon-pyrromycinone glycosides, rhodirubins (A, B, C and E) and all triglycosides containing L-cinerulose, L-rhodinose or 2-deoxy-L-fucose as terminal sugar.</text>
</comment>
<comment type="catalytic activity">
    <reaction evidence="4">
        <text>aclacinomycin N + O2 = aclacinomycin A + H2O2</text>
        <dbReference type="Rhea" id="RHEA:37423"/>
        <dbReference type="ChEBI" id="CHEBI:15379"/>
        <dbReference type="ChEBI" id="CHEBI:16240"/>
        <dbReference type="ChEBI" id="CHEBI:77980"/>
        <dbReference type="ChEBI" id="CHEBI:77991"/>
        <dbReference type="EC" id="1.1.3.45"/>
    </reaction>
</comment>
<comment type="catalytic activity">
    <reaction evidence="4">
        <text>aclacinomycin A + O2 = aclacinomycin Y + H2O2</text>
        <dbReference type="Rhea" id="RHEA:37791"/>
        <dbReference type="ChEBI" id="CHEBI:15379"/>
        <dbReference type="ChEBI" id="CHEBI:16240"/>
        <dbReference type="ChEBI" id="CHEBI:77980"/>
        <dbReference type="ChEBI" id="CHEBI:77985"/>
        <dbReference type="EC" id="1.3.3.14"/>
    </reaction>
</comment>
<comment type="cofactor">
    <cofactor evidence="4 5">
        <name>FAD</name>
        <dbReference type="ChEBI" id="CHEBI:57692"/>
    </cofactor>
    <text evidence="4">Binds 1 FAD per subunit in a bicovalent manner.</text>
</comment>
<comment type="activity regulation">
    <text evidence="5">Inhibited by ascorbic acid and iron ion.</text>
</comment>
<comment type="biophysicochemical properties">
    <kinetics>
        <KM evidence="4">8.5 uM for AclA</KM>
        <text evidence="4">kcat is 0.17 sec(-1) for oxidase activity with AclA.</text>
    </kinetics>
    <phDependence>
        <text evidence="5">Optimum pH is 5.5.</text>
    </phDependence>
</comment>
<comment type="subunit">
    <text evidence="4">Homotetramer; dimer of dimers.</text>
</comment>
<comment type="PTM">
    <text evidence="1 4">Predicted to be exported by the Tat system. The position of the signal peptide cleavage has been experimentally proven.</text>
</comment>
<comment type="PTM">
    <text evidence="4">The FAD cofactor is bound via a bicovalent 6-S-cysteinyl, 8alpha-N1-histidyl FAD linkage.</text>
</comment>
<comment type="disruption phenotype">
    <text evidence="5">Cells lacking this gene accumulate various aclacinomycin analogs.</text>
</comment>
<comment type="miscellaneous">
    <text evidence="6">AknOx uses two distinct sets of catalytic residues in the two reactions. Tyr-493 is responsible for proton abstraction from the C-4 hydroxyl group in the first reaction, the oxidation of rhodinose to cinerulose A. Tyr-421 is responsible for the proton abstraction from C3 of cinerulose A in the second reaction, for formation L-aculose.</text>
</comment>
<comment type="similarity">
    <text evidence="7">Belongs to the oxygen-dependent FAD-linked oxidoreductase family.</text>
</comment>
<protein>
    <recommendedName>
        <fullName evidence="6">Aclacinomycin-N/aclacinomycin-A oxidase</fullName>
        <shortName evidence="6">AknOx</shortName>
        <ecNumber evidence="4">1.1.3.45</ecNumber>
        <ecNumber evidence="4">1.3.3.14</ecNumber>
    </recommendedName>
    <alternativeName>
        <fullName evidence="6">Aclacinomycin oxidoreductase</fullName>
    </alternativeName>
</protein>
<dbReference type="EC" id="1.1.3.45" evidence="4"/>
<dbReference type="EC" id="1.3.3.14" evidence="4"/>
<dbReference type="EMBL" id="AF257324">
    <property type="protein sequence ID" value="ABI15166.1"/>
    <property type="molecule type" value="Genomic_DNA"/>
</dbReference>
<dbReference type="PDB" id="2IPI">
    <property type="method" value="X-ray"/>
    <property type="resolution" value="1.65 A"/>
    <property type="chains" value="A/B/C/D=44-545"/>
</dbReference>
<dbReference type="PDBsum" id="2IPI"/>
<dbReference type="SMR" id="Q0PCD7"/>
<dbReference type="KEGG" id="ag:ABI15166"/>
<dbReference type="BioCyc" id="MetaCyc:MONOMER-18204"/>
<dbReference type="BRENDA" id="1.1.3.45">
    <property type="organism ID" value="13206"/>
</dbReference>
<dbReference type="BRENDA" id="1.3.3.14">
    <property type="organism ID" value="13206"/>
</dbReference>
<dbReference type="EvolutionaryTrace" id="Q0PCD7"/>
<dbReference type="GO" id="GO:0071949">
    <property type="term" value="F:FAD binding"/>
    <property type="evidence" value="ECO:0007669"/>
    <property type="project" value="InterPro"/>
</dbReference>
<dbReference type="GO" id="GO:0016491">
    <property type="term" value="F:oxidoreductase activity"/>
    <property type="evidence" value="ECO:0007669"/>
    <property type="project" value="UniProtKB-KW"/>
</dbReference>
<dbReference type="GO" id="GO:0017000">
    <property type="term" value="P:antibiotic biosynthetic process"/>
    <property type="evidence" value="ECO:0007669"/>
    <property type="project" value="UniProtKB-KW"/>
</dbReference>
<dbReference type="Gene3D" id="3.30.465.10">
    <property type="match status" value="1"/>
</dbReference>
<dbReference type="Gene3D" id="3.40.462.20">
    <property type="match status" value="1"/>
</dbReference>
<dbReference type="InterPro" id="IPR012951">
    <property type="entry name" value="BBE"/>
</dbReference>
<dbReference type="InterPro" id="IPR016166">
    <property type="entry name" value="FAD-bd_PCMH"/>
</dbReference>
<dbReference type="InterPro" id="IPR036318">
    <property type="entry name" value="FAD-bd_PCMH-like_sf"/>
</dbReference>
<dbReference type="InterPro" id="IPR016169">
    <property type="entry name" value="FAD-bd_PCMH_sub2"/>
</dbReference>
<dbReference type="InterPro" id="IPR050416">
    <property type="entry name" value="FAD-linked_Oxidoreductase"/>
</dbReference>
<dbReference type="InterPro" id="IPR006094">
    <property type="entry name" value="Oxid_FAD_bind_N"/>
</dbReference>
<dbReference type="InterPro" id="IPR006311">
    <property type="entry name" value="TAT_signal"/>
</dbReference>
<dbReference type="PANTHER" id="PTHR42973">
    <property type="entry name" value="BINDING OXIDOREDUCTASE, PUTATIVE (AFU_ORTHOLOGUE AFUA_1G17690)-RELATED"/>
    <property type="match status" value="1"/>
</dbReference>
<dbReference type="PANTHER" id="PTHR42973:SF39">
    <property type="entry name" value="FAD-BINDING PCMH-TYPE DOMAIN-CONTAINING PROTEIN"/>
    <property type="match status" value="1"/>
</dbReference>
<dbReference type="Pfam" id="PF08031">
    <property type="entry name" value="BBE"/>
    <property type="match status" value="1"/>
</dbReference>
<dbReference type="Pfam" id="PF01565">
    <property type="entry name" value="FAD_binding_4"/>
    <property type="match status" value="1"/>
</dbReference>
<dbReference type="SUPFAM" id="SSF56176">
    <property type="entry name" value="FAD-binding/transporter-associated domain-like"/>
    <property type="match status" value="1"/>
</dbReference>
<dbReference type="PROSITE" id="PS51387">
    <property type="entry name" value="FAD_PCMH"/>
    <property type="match status" value="1"/>
</dbReference>
<dbReference type="PROSITE" id="PS51318">
    <property type="entry name" value="TAT"/>
    <property type="match status" value="1"/>
</dbReference>
<feature type="signal peptide" description="Tat-type signal" evidence="1 4">
    <location>
        <begin position="1"/>
        <end position="43"/>
    </location>
</feature>
<feature type="chain" id="PRO_0000430672" description="Aclacinomycin-N/aclacinomycin-A oxidase">
    <location>
        <begin position="44"/>
        <end position="545"/>
    </location>
</feature>
<feature type="domain" description="FAD-binding PCMH-type" evidence="2">
    <location>
        <begin position="76"/>
        <end position="256"/>
    </location>
</feature>
<feature type="active site" description="Proton acceptor" evidence="4">
    <location>
        <position position="421"/>
    </location>
</feature>
<feature type="active site" description="Proton acceptor" evidence="4">
    <location>
        <position position="493"/>
    </location>
</feature>
<feature type="binding site" evidence="4 8">
    <location>
        <position position="451"/>
    </location>
    <ligand>
        <name>aclacinomycin Y</name>
        <dbReference type="ChEBI" id="CHEBI:77985"/>
    </ligand>
</feature>
<feature type="binding site" evidence="4">
    <location>
        <position position="492"/>
    </location>
    <ligand>
        <name>FAD</name>
        <dbReference type="ChEBI" id="CHEBI:57692"/>
    </ligand>
</feature>
<feature type="binding site" evidence="4 8">
    <location>
        <position position="493"/>
    </location>
    <ligand>
        <name>aclacinomycin Y</name>
        <dbReference type="ChEBI" id="CHEBI:77985"/>
    </ligand>
</feature>
<feature type="cross-link" description="6-(S-cysteinyl)-8alpha-(pros-histidyl)-FAD (His-Cys)" evidence="4">
    <location>
        <begin position="113"/>
        <end position="173"/>
    </location>
</feature>
<feature type="mutagenesis site" description="Loss of oxidase activity. Loss of oxidase activity; when associated with F-493." evidence="4">
    <original>Y</original>
    <variation>F</variation>
    <location>
        <position position="187"/>
    </location>
</feature>
<feature type="mutagenesis site" description="The oxidase activity is similar to the wild-type." evidence="4">
    <original>H</original>
    <variation>A</variation>
    <location>
        <position position="314"/>
    </location>
</feature>
<feature type="mutagenesis site" description="The oxidase activity is slightly decreased." evidence="4">
    <original>E</original>
    <variation>A</variation>
    <variation>Q</variation>
    <location>
        <position position="417"/>
    </location>
</feature>
<feature type="mutagenesis site" description="The oxidase activity is slightly decreased." evidence="4">
    <original>S</original>
    <variation>A</variation>
    <location>
        <position position="419"/>
    </location>
</feature>
<feature type="mutagenesis site" description="The oxidase activity for the first reaction is similar to the wild-type. Loss of oxidase activity; when associated with F-493." evidence="4">
    <original>Y</original>
    <variation>F</variation>
    <location>
        <position position="421"/>
    </location>
</feature>
<feature type="mutagenesis site" description="Loss of oxidase activity. Loss of oxidase activity; when associated with F-187 and F-421." evidence="4">
    <original>Y</original>
    <variation>F</variation>
    <location>
        <position position="493"/>
    </location>
</feature>
<feature type="strand" evidence="9">
    <location>
        <begin position="56"/>
        <end position="61"/>
    </location>
</feature>
<feature type="helix" evidence="9">
    <location>
        <begin position="64"/>
        <end position="68"/>
    </location>
</feature>
<feature type="strand" evidence="9">
    <location>
        <begin position="81"/>
        <end position="85"/>
    </location>
</feature>
<feature type="helix" evidence="9">
    <location>
        <begin position="89"/>
        <end position="102"/>
    </location>
</feature>
<feature type="strand" evidence="9">
    <location>
        <begin position="106"/>
        <end position="111"/>
    </location>
</feature>
<feature type="helix" evidence="9">
    <location>
        <begin position="118"/>
        <end position="120"/>
    </location>
</feature>
<feature type="strand" evidence="9">
    <location>
        <begin position="126"/>
        <end position="129"/>
    </location>
</feature>
<feature type="strand" evidence="9">
    <location>
        <begin position="136"/>
        <end position="139"/>
    </location>
</feature>
<feature type="turn" evidence="9">
    <location>
        <begin position="140"/>
        <end position="143"/>
    </location>
</feature>
<feature type="strand" evidence="9">
    <location>
        <begin position="144"/>
        <end position="147"/>
    </location>
</feature>
<feature type="helix" evidence="9">
    <location>
        <begin position="153"/>
        <end position="164"/>
    </location>
</feature>
<feature type="helix" evidence="9">
    <location>
        <begin position="178"/>
        <end position="181"/>
    </location>
</feature>
<feature type="turn" evidence="9">
    <location>
        <begin position="182"/>
        <end position="185"/>
    </location>
</feature>
<feature type="helix" evidence="9">
    <location>
        <begin position="191"/>
        <end position="194"/>
    </location>
</feature>
<feature type="helix" evidence="9">
    <location>
        <begin position="197"/>
        <end position="200"/>
    </location>
</feature>
<feature type="strand" evidence="9">
    <location>
        <begin position="201"/>
        <end position="209"/>
    </location>
</feature>
<feature type="strand" evidence="9">
    <location>
        <begin position="215"/>
        <end position="221"/>
    </location>
</feature>
<feature type="helix" evidence="9">
    <location>
        <begin position="229"/>
        <end position="234"/>
    </location>
</feature>
<feature type="turn" evidence="9">
    <location>
        <begin position="235"/>
        <end position="237"/>
    </location>
</feature>
<feature type="strand" evidence="9">
    <location>
        <begin position="240"/>
        <end position="243"/>
    </location>
</feature>
<feature type="strand" evidence="9">
    <location>
        <begin position="245"/>
        <end position="251"/>
    </location>
</feature>
<feature type="helix" evidence="9">
    <location>
        <begin position="261"/>
        <end position="263"/>
    </location>
</feature>
<feature type="strand" evidence="9">
    <location>
        <begin position="272"/>
        <end position="281"/>
    </location>
</feature>
<feature type="helix" evidence="9">
    <location>
        <begin position="286"/>
        <end position="302"/>
    </location>
</feature>
<feature type="strand" evidence="9">
    <location>
        <begin position="305"/>
        <end position="308"/>
    </location>
</feature>
<feature type="helix" evidence="9">
    <location>
        <begin position="309"/>
        <end position="312"/>
    </location>
</feature>
<feature type="strand" evidence="9">
    <location>
        <begin position="314"/>
        <end position="320"/>
    </location>
</feature>
<feature type="strand" evidence="9">
    <location>
        <begin position="326"/>
        <end position="334"/>
    </location>
</feature>
<feature type="helix" evidence="9">
    <location>
        <begin position="340"/>
        <end position="351"/>
    </location>
</feature>
<feature type="turn" evidence="9">
    <location>
        <begin position="352"/>
        <end position="354"/>
    </location>
</feature>
<feature type="strand" evidence="9">
    <location>
        <begin position="360"/>
        <end position="366"/>
    </location>
</feature>
<feature type="helix" evidence="9">
    <location>
        <begin position="368"/>
        <end position="372"/>
    </location>
</feature>
<feature type="strand" evidence="9">
    <location>
        <begin position="384"/>
        <end position="394"/>
    </location>
</feature>
<feature type="helix" evidence="9">
    <location>
        <begin position="398"/>
        <end position="409"/>
    </location>
</feature>
<feature type="strand" evidence="9">
    <location>
        <begin position="413"/>
        <end position="422"/>
    </location>
</feature>
<feature type="helix" evidence="9">
    <location>
        <begin position="425"/>
        <end position="429"/>
    </location>
</feature>
<feature type="turn" evidence="9">
    <location>
        <begin position="432"/>
        <end position="434"/>
    </location>
</feature>
<feature type="strand" evidence="9">
    <location>
        <begin position="443"/>
        <end position="453"/>
    </location>
</feature>
<feature type="helix" evidence="9">
    <location>
        <begin position="455"/>
        <end position="457"/>
    </location>
</feature>
<feature type="helix" evidence="9">
    <location>
        <begin position="458"/>
        <end position="472"/>
    </location>
</feature>
<feature type="turn" evidence="9">
    <location>
        <begin position="473"/>
        <end position="476"/>
    </location>
</feature>
<feature type="strand" evidence="9">
    <location>
        <begin position="477"/>
        <end position="479"/>
    </location>
</feature>
<feature type="strand" evidence="9">
    <location>
        <begin position="482"/>
        <end position="486"/>
    </location>
</feature>
<feature type="helix" evidence="9">
    <location>
        <begin position="496"/>
        <end position="499"/>
    </location>
</feature>
<feature type="turn" evidence="9">
    <location>
        <begin position="501"/>
        <end position="503"/>
    </location>
</feature>
<feature type="helix" evidence="9">
    <location>
        <begin position="510"/>
        <end position="515"/>
    </location>
</feature>
<feature type="helix" evidence="9">
    <location>
        <begin position="516"/>
        <end position="518"/>
    </location>
</feature>
<feature type="helix" evidence="9">
    <location>
        <begin position="519"/>
        <end position="529"/>
    </location>
</feature>